<proteinExistence type="inferred from homology"/>
<protein>
    <recommendedName>
        <fullName evidence="1">1D-myo-inositol 2-acetamido-2-deoxy-alpha-D-glucopyranoside deacetylase</fullName>
        <shortName evidence="1">GlcNAc-Ins deacetylase</shortName>
        <ecNumber evidence="1">3.5.1.103</ecNumber>
    </recommendedName>
    <alternativeName>
        <fullName>N-acetyl-1-D-myo-inositol 2-amino-2-deoxy-alpha-D-glucopyranoside deacetylase</fullName>
    </alternativeName>
</protein>
<keyword id="KW-0378">Hydrolase</keyword>
<keyword id="KW-0479">Metal-binding</keyword>
<keyword id="KW-1185">Reference proteome</keyword>
<keyword id="KW-0862">Zinc</keyword>
<gene>
    <name evidence="1" type="primary">mshB</name>
    <name type="ordered locus">Svir_31100</name>
</gene>
<comment type="function">
    <text evidence="1">Catalyzes the deacetylation of 1D-myo-inositol 2-acetamido-2-deoxy-alpha-D-glucopyranoside (GlcNAc-Ins) in the mycothiol biosynthesis pathway.</text>
</comment>
<comment type="catalytic activity">
    <reaction evidence="1">
        <text>1D-myo-inositol 2-acetamido-2-deoxy-alpha-D-glucopyranoside + H2O = 1D-myo-inositol 2-amino-2-deoxy-alpha-D-glucopyranoside + acetate</text>
        <dbReference type="Rhea" id="RHEA:26180"/>
        <dbReference type="ChEBI" id="CHEBI:15377"/>
        <dbReference type="ChEBI" id="CHEBI:30089"/>
        <dbReference type="ChEBI" id="CHEBI:52442"/>
        <dbReference type="ChEBI" id="CHEBI:58886"/>
        <dbReference type="EC" id="3.5.1.103"/>
    </reaction>
</comment>
<comment type="cofactor">
    <cofactor evidence="1">
        <name>Zn(2+)</name>
        <dbReference type="ChEBI" id="CHEBI:29105"/>
    </cofactor>
    <text evidence="1">Binds 1 zinc ion per subunit.</text>
</comment>
<comment type="similarity">
    <text evidence="1">Belongs to the MshB deacetylase family.</text>
</comment>
<organism>
    <name type="scientific">Saccharomonospora viridis (strain ATCC 15386 / DSM 43017 / JCM 3036 / CCUG 5913 / NBRC 12207 / NCIMB 9602 / P101)</name>
    <name type="common">Thermoactinomyces viridis</name>
    <dbReference type="NCBI Taxonomy" id="471857"/>
    <lineage>
        <taxon>Bacteria</taxon>
        <taxon>Bacillati</taxon>
        <taxon>Actinomycetota</taxon>
        <taxon>Actinomycetes</taxon>
        <taxon>Pseudonocardiales</taxon>
        <taxon>Pseudonocardiaceae</taxon>
        <taxon>Saccharomonospora</taxon>
    </lineage>
</organism>
<sequence length="268" mass="29034">MLFVHAHPDDESITTGGTIARYSAEGAHVTVVTCTLGEEGEIIPAELEQLGAWAGDQLGGYRIGELAEAGVALGWSEHRFLGGPGRWRDSGMAGVESNEHPRAFVRGAMSEQVEQLLAVFDEVRPEVVVTYDPNGGYGHPDHIRAHRVATAAVERSEGVRRLFYTVSSREATTRGLAALRRDERVPFRVPADEELPTTPDADITTRVDISAYREVKFAALRAHRTQITVGPDCFALSNGIAQPVPTTEFFVLARGPKEGADTDLFGGL</sequence>
<name>MSHB_SACVD</name>
<feature type="chain" id="PRO_0000400217" description="1D-myo-inositol 2-acetamido-2-deoxy-alpha-D-glucopyranoside deacetylase">
    <location>
        <begin position="1"/>
        <end position="268"/>
    </location>
</feature>
<feature type="binding site" evidence="1">
    <location>
        <position position="7"/>
    </location>
    <ligand>
        <name>Zn(2+)</name>
        <dbReference type="ChEBI" id="CHEBI:29105"/>
    </ligand>
</feature>
<feature type="binding site" evidence="1">
    <location>
        <position position="10"/>
    </location>
    <ligand>
        <name>Zn(2+)</name>
        <dbReference type="ChEBI" id="CHEBI:29105"/>
    </ligand>
</feature>
<feature type="binding site" evidence="1">
    <location>
        <position position="142"/>
    </location>
    <ligand>
        <name>Zn(2+)</name>
        <dbReference type="ChEBI" id="CHEBI:29105"/>
    </ligand>
</feature>
<evidence type="ECO:0000255" key="1">
    <source>
        <dbReference type="HAMAP-Rule" id="MF_01696"/>
    </source>
</evidence>
<dbReference type="EC" id="3.5.1.103" evidence="1"/>
<dbReference type="EMBL" id="CP001683">
    <property type="protein sequence ID" value="ACU98085.1"/>
    <property type="molecule type" value="Genomic_DNA"/>
</dbReference>
<dbReference type="RefSeq" id="WP_015787397.1">
    <property type="nucleotide sequence ID" value="NC_013159.1"/>
</dbReference>
<dbReference type="SMR" id="C7MY07"/>
<dbReference type="STRING" id="471857.Svir_31100"/>
<dbReference type="KEGG" id="svi:Svir_31100"/>
<dbReference type="eggNOG" id="COG2120">
    <property type="taxonomic scope" value="Bacteria"/>
</dbReference>
<dbReference type="HOGENOM" id="CLU_049311_2_1_11"/>
<dbReference type="Proteomes" id="UP000000841">
    <property type="component" value="Chromosome"/>
</dbReference>
<dbReference type="GO" id="GO:0035595">
    <property type="term" value="F:N-acetylglucosaminylinositol deacetylase activity"/>
    <property type="evidence" value="ECO:0007669"/>
    <property type="project" value="UniProtKB-EC"/>
</dbReference>
<dbReference type="GO" id="GO:0008270">
    <property type="term" value="F:zinc ion binding"/>
    <property type="evidence" value="ECO:0007669"/>
    <property type="project" value="UniProtKB-UniRule"/>
</dbReference>
<dbReference type="GO" id="GO:0010125">
    <property type="term" value="P:mycothiol biosynthetic process"/>
    <property type="evidence" value="ECO:0007669"/>
    <property type="project" value="UniProtKB-UniRule"/>
</dbReference>
<dbReference type="Gene3D" id="3.40.50.10320">
    <property type="entry name" value="LmbE-like"/>
    <property type="match status" value="1"/>
</dbReference>
<dbReference type="HAMAP" id="MF_01696">
    <property type="entry name" value="MshB"/>
    <property type="match status" value="1"/>
</dbReference>
<dbReference type="InterPro" id="IPR003737">
    <property type="entry name" value="GlcNAc_PI_deacetylase-related"/>
</dbReference>
<dbReference type="InterPro" id="IPR024078">
    <property type="entry name" value="LmbE-like_dom_sf"/>
</dbReference>
<dbReference type="InterPro" id="IPR017810">
    <property type="entry name" value="Mycothiol_biosynthesis_MshB"/>
</dbReference>
<dbReference type="NCBIfam" id="TIGR03445">
    <property type="entry name" value="mycothiol_MshB"/>
    <property type="match status" value="1"/>
</dbReference>
<dbReference type="PANTHER" id="PTHR12993:SF26">
    <property type="entry name" value="1D-MYO-INOSITOL 2-ACETAMIDO-2-DEOXY-ALPHA-D-GLUCOPYRANOSIDE DEACETYLASE"/>
    <property type="match status" value="1"/>
</dbReference>
<dbReference type="PANTHER" id="PTHR12993">
    <property type="entry name" value="N-ACETYLGLUCOSAMINYL-PHOSPHATIDYLINOSITOL DE-N-ACETYLASE-RELATED"/>
    <property type="match status" value="1"/>
</dbReference>
<dbReference type="Pfam" id="PF02585">
    <property type="entry name" value="PIG-L"/>
    <property type="match status" value="1"/>
</dbReference>
<dbReference type="SUPFAM" id="SSF102588">
    <property type="entry name" value="LmbE-like"/>
    <property type="match status" value="1"/>
</dbReference>
<reference key="1">
    <citation type="journal article" date="2009" name="Stand. Genomic Sci.">
        <title>Complete genome sequence of Saccharomonospora viridis type strain (P101).</title>
        <authorList>
            <person name="Pati A."/>
            <person name="Sikorski J."/>
            <person name="Nolan M."/>
            <person name="Lapidus A."/>
            <person name="Copeland A."/>
            <person name="Glavina Del Rio T."/>
            <person name="Lucas S."/>
            <person name="Chen F."/>
            <person name="Tice H."/>
            <person name="Pitluck S."/>
            <person name="Cheng J.F."/>
            <person name="Chertkov O."/>
            <person name="Brettin T."/>
            <person name="Han C."/>
            <person name="Detter J.C."/>
            <person name="Kuske C."/>
            <person name="Bruce D."/>
            <person name="Goodwin L."/>
            <person name="Chain P."/>
            <person name="D'haeseleer P."/>
            <person name="Chen A."/>
            <person name="Palaniappan K."/>
            <person name="Ivanova N."/>
            <person name="Mavromatis K."/>
            <person name="Mikhailova N."/>
            <person name="Rohde M."/>
            <person name="Tindall B.J."/>
            <person name="Goker M."/>
            <person name="Bristow J."/>
            <person name="Eisen J.A."/>
            <person name="Markowitz V."/>
            <person name="Hugenholtz P."/>
            <person name="Kyrpides N.C."/>
            <person name="Klenk H.P."/>
        </authorList>
    </citation>
    <scope>NUCLEOTIDE SEQUENCE [LARGE SCALE GENOMIC DNA]</scope>
    <source>
        <strain>ATCC 15386 / DSM 43017 / JCM 3036 / CCUG 5913 / NBRC 12207 / NCIMB 9602 / P101</strain>
    </source>
</reference>
<accession>C7MY07</accession>